<name>GCSH_ECOHS</name>
<organism>
    <name type="scientific">Escherichia coli O9:H4 (strain HS)</name>
    <dbReference type="NCBI Taxonomy" id="331112"/>
    <lineage>
        <taxon>Bacteria</taxon>
        <taxon>Pseudomonadati</taxon>
        <taxon>Pseudomonadota</taxon>
        <taxon>Gammaproteobacteria</taxon>
        <taxon>Enterobacterales</taxon>
        <taxon>Enterobacteriaceae</taxon>
        <taxon>Escherichia</taxon>
    </lineage>
</organism>
<gene>
    <name evidence="1" type="primary">gcvH</name>
    <name type="ordered locus">EcHS_A3063</name>
</gene>
<accession>A8A445</accession>
<sequence>MSNVPAELKYSKEHEWLRKEADGTYTVGITEHAQELLGDMVFVDLPEVGATVSAGDDCAVAESVKAASDIYAPVSGEIVAVNDALSDSPELVNSEPYAGGWIFKIKASDESELESLLDATAYEALLEDE</sequence>
<dbReference type="EMBL" id="CP000802">
    <property type="protein sequence ID" value="ABV07299.1"/>
    <property type="molecule type" value="Genomic_DNA"/>
</dbReference>
<dbReference type="RefSeq" id="WP_001295377.1">
    <property type="nucleotide sequence ID" value="NC_009800.1"/>
</dbReference>
<dbReference type="SMR" id="A8A445"/>
<dbReference type="GeneID" id="93779098"/>
<dbReference type="KEGG" id="ecx:EcHS_A3063"/>
<dbReference type="HOGENOM" id="CLU_097408_2_1_6"/>
<dbReference type="GO" id="GO:0005829">
    <property type="term" value="C:cytosol"/>
    <property type="evidence" value="ECO:0007669"/>
    <property type="project" value="TreeGrafter"/>
</dbReference>
<dbReference type="GO" id="GO:0005960">
    <property type="term" value="C:glycine cleavage complex"/>
    <property type="evidence" value="ECO:0007669"/>
    <property type="project" value="InterPro"/>
</dbReference>
<dbReference type="GO" id="GO:0019464">
    <property type="term" value="P:glycine decarboxylation via glycine cleavage system"/>
    <property type="evidence" value="ECO:0007669"/>
    <property type="project" value="UniProtKB-UniRule"/>
</dbReference>
<dbReference type="CDD" id="cd06848">
    <property type="entry name" value="GCS_H"/>
    <property type="match status" value="1"/>
</dbReference>
<dbReference type="FunFam" id="2.40.50.100:FF:000011">
    <property type="entry name" value="Glycine cleavage system H protein"/>
    <property type="match status" value="1"/>
</dbReference>
<dbReference type="Gene3D" id="2.40.50.100">
    <property type="match status" value="1"/>
</dbReference>
<dbReference type="HAMAP" id="MF_00272">
    <property type="entry name" value="GcvH"/>
    <property type="match status" value="1"/>
</dbReference>
<dbReference type="InterPro" id="IPR003016">
    <property type="entry name" value="2-oxoA_DH_lipoyl-BS"/>
</dbReference>
<dbReference type="InterPro" id="IPR000089">
    <property type="entry name" value="Biotin_lipoyl"/>
</dbReference>
<dbReference type="InterPro" id="IPR002930">
    <property type="entry name" value="GCV_H"/>
</dbReference>
<dbReference type="InterPro" id="IPR033753">
    <property type="entry name" value="GCV_H/Fam206"/>
</dbReference>
<dbReference type="InterPro" id="IPR017453">
    <property type="entry name" value="GCV_H_sub"/>
</dbReference>
<dbReference type="InterPro" id="IPR011053">
    <property type="entry name" value="Single_hybrid_motif"/>
</dbReference>
<dbReference type="NCBIfam" id="TIGR00527">
    <property type="entry name" value="gcvH"/>
    <property type="match status" value="1"/>
</dbReference>
<dbReference type="NCBIfam" id="NF002270">
    <property type="entry name" value="PRK01202.1"/>
    <property type="match status" value="1"/>
</dbReference>
<dbReference type="PANTHER" id="PTHR11715">
    <property type="entry name" value="GLYCINE CLEAVAGE SYSTEM H PROTEIN"/>
    <property type="match status" value="1"/>
</dbReference>
<dbReference type="PANTHER" id="PTHR11715:SF3">
    <property type="entry name" value="GLYCINE CLEAVAGE SYSTEM H PROTEIN-RELATED"/>
    <property type="match status" value="1"/>
</dbReference>
<dbReference type="Pfam" id="PF01597">
    <property type="entry name" value="GCV_H"/>
    <property type="match status" value="1"/>
</dbReference>
<dbReference type="SUPFAM" id="SSF51230">
    <property type="entry name" value="Single hybrid motif"/>
    <property type="match status" value="1"/>
</dbReference>
<dbReference type="PROSITE" id="PS50968">
    <property type="entry name" value="BIOTINYL_LIPOYL"/>
    <property type="match status" value="1"/>
</dbReference>
<dbReference type="PROSITE" id="PS00189">
    <property type="entry name" value="LIPOYL"/>
    <property type="match status" value="1"/>
</dbReference>
<reference key="1">
    <citation type="journal article" date="2008" name="J. Bacteriol.">
        <title>The pangenome structure of Escherichia coli: comparative genomic analysis of E. coli commensal and pathogenic isolates.</title>
        <authorList>
            <person name="Rasko D.A."/>
            <person name="Rosovitz M.J."/>
            <person name="Myers G.S.A."/>
            <person name="Mongodin E.F."/>
            <person name="Fricke W.F."/>
            <person name="Gajer P."/>
            <person name="Crabtree J."/>
            <person name="Sebaihia M."/>
            <person name="Thomson N.R."/>
            <person name="Chaudhuri R."/>
            <person name="Henderson I.R."/>
            <person name="Sperandio V."/>
            <person name="Ravel J."/>
        </authorList>
    </citation>
    <scope>NUCLEOTIDE SEQUENCE [LARGE SCALE GENOMIC DNA]</scope>
    <source>
        <strain>HS</strain>
    </source>
</reference>
<feature type="chain" id="PRO_1000059180" description="Glycine cleavage system H protein">
    <location>
        <begin position="1"/>
        <end position="129"/>
    </location>
</feature>
<feature type="domain" description="Lipoyl-binding" evidence="2">
    <location>
        <begin position="24"/>
        <end position="106"/>
    </location>
</feature>
<feature type="modified residue" description="N6-lipoyllysine" evidence="1">
    <location>
        <position position="65"/>
    </location>
</feature>
<protein>
    <recommendedName>
        <fullName evidence="1">Glycine cleavage system H protein</fullName>
    </recommendedName>
</protein>
<comment type="function">
    <text evidence="1">The glycine cleavage system catalyzes the degradation of glycine. The H protein shuttles the methylamine group of glycine from the P protein to the T protein.</text>
</comment>
<comment type="cofactor">
    <cofactor evidence="1">
        <name>(R)-lipoate</name>
        <dbReference type="ChEBI" id="CHEBI:83088"/>
    </cofactor>
    <text evidence="1">Binds 1 lipoyl cofactor covalently.</text>
</comment>
<comment type="subunit">
    <text evidence="1">The glycine cleavage system is composed of four proteins: P, T, L and H.</text>
</comment>
<comment type="similarity">
    <text evidence="1">Belongs to the GcvH family.</text>
</comment>
<evidence type="ECO:0000255" key="1">
    <source>
        <dbReference type="HAMAP-Rule" id="MF_00272"/>
    </source>
</evidence>
<evidence type="ECO:0000255" key="2">
    <source>
        <dbReference type="PROSITE-ProRule" id="PRU01066"/>
    </source>
</evidence>
<keyword id="KW-0450">Lipoyl</keyword>
<proteinExistence type="inferred from homology"/>